<gene>
    <name type="primary">DBT</name>
</gene>
<name>ODB2_BOVIN</name>
<sequence length="482" mass="53410">MAAALVLRTWSRAAGQLICVRYFQTCGNVHVLKPKYVCFFGYPPFKYSHPYQWLKTTAALQGQIVQFKLSDIGEGIREVTVKEWYVKEGDTVSQFDSICEVQSDKASVTITSRYDGVIKKLYYNLDDTAYVGKPLVDIETEALKDSEEDVVETPAVSHDEHTHQEIKGQKTLATPAVRRLAMENNIKLSEVIGSGKDGRILKEDILNYLEKQTGAILPPSPKAEIMPPPPKPKDRTIPIPISKPPVFIGKDRTEPVKGFHKAMVKTMSAALKIPHFGYCDEVDLTELVKLREELKPIAFARGIKLSFMPFFLKAASLGLLQFPILNASVDENCQNITYKASHNIGIAMDTEQGLIVPNVKNVQIRSIFEIATELNRLQKLGSAGQLSTNDLIGGTFTLSNIGSIGGTYAKPVILPPEVAIGALGTIKALPRFNEKGEVCKAQIMNVSWSADHRIIDGATVSRFSNLWKSYLENPAFMLLDLK</sequence>
<proteinExistence type="evidence at protein level"/>
<feature type="transit peptide" description="Mitochondrion">
    <location>
        <begin position="1"/>
        <end position="61"/>
    </location>
</feature>
<feature type="chain" id="PRO_0000020488" description="Lipoamide acyltransferase component of branched-chain alpha-keto acid dehydrogenase complex, mitochondrial">
    <location>
        <begin position="62"/>
        <end position="482"/>
    </location>
</feature>
<feature type="domain" description="Lipoyl-binding" evidence="5">
    <location>
        <begin position="64"/>
        <end position="139"/>
    </location>
</feature>
<feature type="domain" description="Peripheral subunit-binding (PSBD)" evidence="6">
    <location>
        <begin position="172"/>
        <end position="209"/>
    </location>
</feature>
<feature type="region of interest" description="Critical for association with PPM1K" evidence="1">
    <location>
        <begin position="145"/>
        <end position="160"/>
    </location>
</feature>
<feature type="region of interest" description="Disordered" evidence="7">
    <location>
        <begin position="146"/>
        <end position="171"/>
    </location>
</feature>
<feature type="region of interest" description="Disordered" evidence="7">
    <location>
        <begin position="218"/>
        <end position="238"/>
    </location>
</feature>
<feature type="compositionally biased region" description="Basic and acidic residues" evidence="7">
    <location>
        <begin position="157"/>
        <end position="168"/>
    </location>
</feature>
<feature type="compositionally biased region" description="Pro residues" evidence="7">
    <location>
        <begin position="218"/>
        <end position="230"/>
    </location>
</feature>
<feature type="active site" evidence="4">
    <location>
        <position position="452"/>
    </location>
</feature>
<feature type="active site" evidence="4">
    <location>
        <position position="456"/>
    </location>
</feature>
<feature type="binding site" evidence="8 13">
    <location>
        <position position="291"/>
    </location>
    <ligand>
        <name>CoA</name>
        <dbReference type="ChEBI" id="CHEBI:57287"/>
    </ligand>
</feature>
<feature type="binding site" evidence="8 13">
    <location>
        <position position="306"/>
    </location>
    <ligand>
        <name>CoA</name>
        <dbReference type="ChEBI" id="CHEBI:57287"/>
    </ligand>
</feature>
<feature type="binding site" evidence="8 13">
    <location>
        <position position="349"/>
    </location>
    <ligand>
        <name>CoA</name>
        <dbReference type="ChEBI" id="CHEBI:57287"/>
    </ligand>
</feature>
<feature type="binding site" evidence="8 13">
    <location>
        <position position="378"/>
    </location>
    <ligand>
        <name>CoA</name>
        <dbReference type="ChEBI" id="CHEBI:57287"/>
    </ligand>
</feature>
<feature type="binding site" evidence="8 13">
    <location>
        <position position="399"/>
    </location>
    <ligand>
        <name>CoA</name>
        <dbReference type="ChEBI" id="CHEBI:57287"/>
    </ligand>
</feature>
<feature type="binding site" evidence="8 13">
    <location>
        <position position="400"/>
    </location>
    <ligand>
        <name>CoA</name>
        <dbReference type="ChEBI" id="CHEBI:57287"/>
    </ligand>
</feature>
<feature type="binding site" evidence="8 13">
    <location>
        <position position="403"/>
    </location>
    <ligand>
        <name>CoA</name>
        <dbReference type="ChEBI" id="CHEBI:57287"/>
    </ligand>
</feature>
<feature type="binding site" evidence="8 13">
    <location>
        <position position="424"/>
    </location>
    <ligand>
        <name>CoA</name>
        <dbReference type="ChEBI" id="CHEBI:57287"/>
    </ligand>
</feature>
<feature type="binding site" evidence="8 13">
    <location>
        <position position="426"/>
    </location>
    <ligand>
        <name>CoA</name>
        <dbReference type="ChEBI" id="CHEBI:57287"/>
    </ligand>
</feature>
<feature type="modified residue" description="N6-lipoyllysine" evidence="5 10">
    <location>
        <position position="105"/>
    </location>
</feature>
<feature type="modified residue" description="N6-succinyllysine" evidence="3">
    <location>
        <position position="133"/>
    </location>
</feature>
<feature type="modified residue" description="N6-acetyllysine; alternate" evidence="3">
    <location>
        <position position="196"/>
    </location>
</feature>
<feature type="modified residue" description="N6-succinyllysine; alternate" evidence="3">
    <location>
        <position position="196"/>
    </location>
</feature>
<feature type="modified residue" description="N6-acetyllysine" evidence="3">
    <location>
        <position position="202"/>
    </location>
</feature>
<feature type="modified residue" description="Phosphoserine" evidence="1">
    <location>
        <position position="220"/>
    </location>
</feature>
<feature type="modified residue" description="N6-acetyllysine" evidence="3">
    <location>
        <position position="243"/>
    </location>
</feature>
<feature type="modified residue" description="N6-acetyllysine" evidence="3">
    <location>
        <position position="250"/>
    </location>
</feature>
<feature type="modified residue" description="N6-succinyllysine" evidence="3">
    <location>
        <position position="261"/>
    </location>
</feature>
<feature type="modified residue" description="N6-acetyllysine; alternate" evidence="3">
    <location>
        <position position="289"/>
    </location>
</feature>
<feature type="modified residue" description="N6-succinyllysine; alternate" evidence="3">
    <location>
        <position position="289"/>
    </location>
</feature>
<feature type="modified residue" description="N6-acetyllysine" evidence="1">
    <location>
        <position position="295"/>
    </location>
</feature>
<feature type="modified residue" description="N6-acetyllysine" evidence="3">
    <location>
        <position position="304"/>
    </location>
</feature>
<feature type="modified residue" description="N6-acetyllysine" evidence="3">
    <location>
        <position position="435"/>
    </location>
</feature>
<feature type="modified residue" description="N6-acetyllysine; alternate" evidence="3">
    <location>
        <position position="440"/>
    </location>
</feature>
<feature type="modified residue" description="N6-succinyllysine; alternate" evidence="3">
    <location>
        <position position="440"/>
    </location>
</feature>
<feature type="sequence conflict" description="In Ref. 3; AAA30596." evidence="11" ref="3">
    <original>A</original>
    <variation>G</variation>
    <location>
        <position position="173"/>
    </location>
</feature>
<feature type="strand" evidence="14">
    <location>
        <begin position="252"/>
        <end position="255"/>
    </location>
</feature>
<feature type="helix" evidence="14">
    <location>
        <begin position="258"/>
        <end position="260"/>
    </location>
</feature>
<feature type="helix" evidence="14">
    <location>
        <begin position="261"/>
        <end position="269"/>
    </location>
</feature>
<feature type="helix" evidence="14">
    <location>
        <begin position="270"/>
        <end position="272"/>
    </location>
</feature>
<feature type="strand" evidence="14">
    <location>
        <begin position="275"/>
        <end position="283"/>
    </location>
</feature>
<feature type="helix" evidence="14">
    <location>
        <begin position="285"/>
        <end position="300"/>
    </location>
</feature>
<feature type="helix" evidence="14">
    <location>
        <begin position="308"/>
        <end position="321"/>
    </location>
</feature>
<feature type="helix" evidence="14">
    <location>
        <begin position="323"/>
        <end position="325"/>
    </location>
</feature>
<feature type="strand" evidence="14">
    <location>
        <begin position="326"/>
        <end position="329"/>
    </location>
</feature>
<feature type="strand" evidence="14">
    <location>
        <begin position="335"/>
        <end position="338"/>
    </location>
</feature>
<feature type="strand" evidence="14">
    <location>
        <begin position="344"/>
        <end position="346"/>
    </location>
</feature>
<feature type="strand" evidence="14">
    <location>
        <begin position="348"/>
        <end position="350"/>
    </location>
</feature>
<feature type="strand" evidence="14">
    <location>
        <begin position="353"/>
        <end position="355"/>
    </location>
</feature>
<feature type="helix" evidence="14">
    <location>
        <begin position="362"/>
        <end position="364"/>
    </location>
</feature>
<feature type="helix" evidence="14">
    <location>
        <begin position="367"/>
        <end position="383"/>
    </location>
</feature>
<feature type="helix" evidence="14">
    <location>
        <begin position="388"/>
        <end position="391"/>
    </location>
</feature>
<feature type="strand" evidence="14">
    <location>
        <begin position="396"/>
        <end position="399"/>
    </location>
</feature>
<feature type="helix" evidence="14">
    <location>
        <begin position="401"/>
        <end position="403"/>
    </location>
</feature>
<feature type="strand" evidence="14">
    <location>
        <begin position="419"/>
        <end position="423"/>
    </location>
</feature>
<feature type="strand" evidence="14">
    <location>
        <begin position="427"/>
        <end position="432"/>
    </location>
</feature>
<feature type="strand" evidence="14">
    <location>
        <begin position="438"/>
        <end position="451"/>
    </location>
</feature>
<feature type="turn" evidence="14">
    <location>
        <begin position="452"/>
        <end position="454"/>
    </location>
</feature>
<feature type="helix" evidence="14">
    <location>
        <begin position="457"/>
        <end position="472"/>
    </location>
</feature>
<feature type="helix" evidence="14">
    <location>
        <begin position="475"/>
        <end position="480"/>
    </location>
</feature>
<evidence type="ECO:0000250" key="1">
    <source>
        <dbReference type="UniProtKB" id="P11182"/>
    </source>
</evidence>
<evidence type="ECO:0000250" key="2">
    <source>
        <dbReference type="UniProtKB" id="P12694"/>
    </source>
</evidence>
<evidence type="ECO:0000250" key="3">
    <source>
        <dbReference type="UniProtKB" id="P53395"/>
    </source>
</evidence>
<evidence type="ECO:0000255" key="4"/>
<evidence type="ECO:0000255" key="5">
    <source>
        <dbReference type="PROSITE-ProRule" id="PRU01066"/>
    </source>
</evidence>
<evidence type="ECO:0000255" key="6">
    <source>
        <dbReference type="PROSITE-ProRule" id="PRU01170"/>
    </source>
</evidence>
<evidence type="ECO:0000256" key="7">
    <source>
        <dbReference type="SAM" id="MobiDB-lite"/>
    </source>
</evidence>
<evidence type="ECO:0000269" key="8">
    <source>
    </source>
</evidence>
<evidence type="ECO:0000269" key="9">
    <source>
    </source>
</evidence>
<evidence type="ECO:0000269" key="10">
    <source>
    </source>
</evidence>
<evidence type="ECO:0000305" key="11"/>
<evidence type="ECO:0000305" key="12">
    <source>
    </source>
</evidence>
<evidence type="ECO:0007744" key="13">
    <source>
        <dbReference type="PDB" id="2II4"/>
    </source>
</evidence>
<evidence type="ECO:0007829" key="14">
    <source>
        <dbReference type="PDB" id="2II3"/>
    </source>
</evidence>
<reference key="1">
    <citation type="journal article" date="1988" name="J. Biol. Chem.">
        <title>Characterization and conservation of the inner E2 core domain structure of branched-chain alpha-keto acid dehydrogenase complex from bovine liver. Construction of a cDNA encoding the entire transacylase (E2b) precursor.</title>
        <authorList>
            <person name="Griffin T.A."/>
            <person name="Lau K.S."/>
            <person name="Chuang D.T."/>
        </authorList>
    </citation>
    <scope>NUCLEOTIDE SEQUENCE [MRNA]</scope>
</reference>
<reference key="2">
    <citation type="submission" date="2007-03" db="EMBL/GenBank/DDBJ databases">
        <authorList>
            <consortium name="NIH - Mammalian Gene Collection (MGC) project"/>
        </authorList>
    </citation>
    <scope>NUCLEOTIDE SEQUENCE [LARGE SCALE MRNA]</scope>
    <source>
        <strain>Hereford</strain>
        <tissue>Ascending colon</tissue>
    </source>
</reference>
<reference key="3">
    <citation type="journal article" date="1988" name="Biochemistry">
        <title>Conservation of primary structure in the lipoyl-bearing and dihydrolipoyl dehydrogenase binding domains of mammalian branched-chain alpha-keto acid dehydrogenase complex: molecular cloning of human and bovine transacylase (E2) cDNAs.</title>
        <authorList>
            <person name="Lau K.S."/>
            <person name="Griffin T.A."/>
            <person name="Hu C.-W.C."/>
            <person name="Chuang D.T."/>
        </authorList>
    </citation>
    <scope>NUCLEOTIDE SEQUENCE [MRNA] OF 1-228</scope>
</reference>
<reference key="4">
    <citation type="journal article" date="1988" name="J. Biol. Chem.">
        <title>Nucleotide sequence of a cDNA for branched chain acyltransferase with analysis of the deduced protein structure.</title>
        <authorList>
            <person name="Hummel K.B."/>
            <person name="Litwer S."/>
            <person name="Bradford A.P."/>
            <person name="Aitken A."/>
            <person name="Danner D.J."/>
            <person name="Yeaman S.J."/>
        </authorList>
    </citation>
    <scope>PROTEIN SEQUENCE OF 100-109</scope>
    <scope>LIPOYLATION AT LYS-105</scope>
</reference>
<reference key="5">
    <citation type="journal article" date="1978" name="Proc. Natl. Acad. Sci. U.S.A.">
        <title>Purification and characterization of branched chain alpha-keto acid dehydrogenase complex of bovine kidney.</title>
        <authorList>
            <person name="Pettit F.H."/>
            <person name="Yeaman S.J."/>
            <person name="Reed L.J."/>
        </authorList>
    </citation>
    <scope>FUNCTION</scope>
    <scope>SUBCELLULAR LOCATION</scope>
    <scope>TISSUE SPECIFICITY</scope>
    <scope>CHARACTERIZATION OF COMPLEX CATALYTIC ACTIVITY</scope>
    <scope>CATALYTIC ACTIVITY</scope>
</reference>
<reference key="6">
    <citation type="journal article" date="2006" name="EMBO J.">
        <title>A synchronized substrate-gating mechanism revealed by cubic-core structure of the bovine branched-chain alpha-ketoacid dehydrogenase complex.</title>
        <authorList>
            <person name="Kato M."/>
            <person name="Wynn R.M."/>
            <person name="Chuang J.L."/>
            <person name="Brautigam C.A."/>
            <person name="Custorio M."/>
            <person name="Chuang D.T."/>
        </authorList>
    </citation>
    <scope>X-RAY CRYSTALLOGRAPHY (2.17 ANGSTROMS) OF 223-482</scope>
</reference>
<keyword id="KW-0002">3D-structure</keyword>
<keyword id="KW-0007">Acetylation</keyword>
<keyword id="KW-0012">Acyltransferase</keyword>
<keyword id="KW-0903">Direct protein sequencing</keyword>
<keyword id="KW-0450">Lipoyl</keyword>
<keyword id="KW-0496">Mitochondrion</keyword>
<keyword id="KW-0597">Phosphoprotein</keyword>
<keyword id="KW-1185">Reference proteome</keyword>
<keyword id="KW-0808">Transferase</keyword>
<keyword id="KW-0809">Transit peptide</keyword>
<organism>
    <name type="scientific">Bos taurus</name>
    <name type="common">Bovine</name>
    <dbReference type="NCBI Taxonomy" id="9913"/>
    <lineage>
        <taxon>Eukaryota</taxon>
        <taxon>Metazoa</taxon>
        <taxon>Chordata</taxon>
        <taxon>Craniata</taxon>
        <taxon>Vertebrata</taxon>
        <taxon>Euteleostomi</taxon>
        <taxon>Mammalia</taxon>
        <taxon>Eutheria</taxon>
        <taxon>Laurasiatheria</taxon>
        <taxon>Artiodactyla</taxon>
        <taxon>Ruminantia</taxon>
        <taxon>Pecora</taxon>
        <taxon>Bovidae</taxon>
        <taxon>Bovinae</taxon>
        <taxon>Bos</taxon>
    </lineage>
</organism>
<accession>P11181</accession>
<accession>A7YWE9</accession>
<comment type="function">
    <text evidence="9">The branched-chain alpha-keto dehydrogenase complex catalyzes the overall conversion of alpha-keto acids to acyl-CoA and CO(2). It contains multiple copies of three enzymatic components: branched-chain alpha-keto acid decarboxylase (E1), lipoamide acyltransferase (E2) and lipoamide dehydrogenase (E3). Within this complex, the catalytic function of this enzyme is to accept, and to transfer to coenzyme A, acyl groups that are generated by the branched-chain alpha-keto acid decarboxylase component.</text>
</comment>
<comment type="catalytic activity">
    <reaction evidence="9">
        <text>N(6)-[(R)-dihydrolipoyl]-L-lysyl-[protein] + 2-methylpropanoyl-CoA = N(6)-[(R)-S(8)-2-methylpropanoyldihydrolipoyl]-L-lysyl-[protein] + CoA</text>
        <dbReference type="Rhea" id="RHEA:18865"/>
        <dbReference type="Rhea" id="RHEA-COMP:10475"/>
        <dbReference type="Rhea" id="RHEA-COMP:10497"/>
        <dbReference type="ChEBI" id="CHEBI:57287"/>
        <dbReference type="ChEBI" id="CHEBI:57338"/>
        <dbReference type="ChEBI" id="CHEBI:83100"/>
        <dbReference type="ChEBI" id="CHEBI:83142"/>
        <dbReference type="EC" id="2.3.1.168"/>
    </reaction>
    <physiologicalReaction direction="left-to-right" evidence="12">
        <dbReference type="Rhea" id="RHEA:18866"/>
    </physiologicalReaction>
</comment>
<comment type="cofactor">
    <cofactor>
        <name>(R)-lipoate</name>
        <dbReference type="ChEBI" id="CHEBI:83088"/>
    </cofactor>
    <text evidence="10">Binds 1 lipoyl cofactor covalently.</text>
</comment>
<comment type="subunit">
    <text evidence="1 2">Forms a 24-polypeptide structural core with octahedral symmetry that represents the E2 component of the branched-chain alpha-ketoacid dehydrogenase (BCKDH) complex. The BCKDH complex is composed of three major building blocks E1, E2 and E3. It is organized around E2, a 24-meric cubic core composed of DBT, to which are associated 6 to 12 copies of E1, and approximately 6 copies of the dehydrogenase E3, a DLD dimer (By similarity). Interacts with PPM1K with a 24:1 stoichiometry; the N-terminal region (residues 49-61) of PPM1K and C-terminal linker of the lipoyl domain of DBT/E2 (residues 145-160) are critical for this interaction whereas the lipoyl prosthetic group is dispensable. This interaction requires colocalization in mitochondria (By similarity). PPM1K competes with BCKDK for binding to DBT; this interaction is modulated by branched-chain alpha-keto acids (BCKAs). At steady state, BCKDH holoenzyme preferentially binds BCKDK and BCKDHA is phosphorylated. In response to high levels of BCKAs, BCKDK is replaced by PPM1K leading to BCKDHA dephosphorylation (By similarity).</text>
</comment>
<comment type="subcellular location">
    <subcellularLocation>
        <location evidence="9">Mitochondrion matrix</location>
    </subcellularLocation>
</comment>
<comment type="tissue specificity">
    <text evidence="9">Expressed in kidney (at protein level).</text>
</comment>
<comment type="similarity">
    <text evidence="11">Belongs to the 2-oxoacid dehydrogenase family.</text>
</comment>
<protein>
    <recommendedName>
        <fullName>Lipoamide acyltransferase component of branched-chain alpha-keto acid dehydrogenase complex, mitochondrial</fullName>
        <ecNumber evidence="9">2.3.1.168</ecNumber>
    </recommendedName>
    <alternativeName>
        <fullName>Branched-chain alpha-keto acid dehydrogenase complex component E2</fullName>
        <shortName>BCKAD-E2</shortName>
        <shortName>BCKADE2</shortName>
    </alternativeName>
    <alternativeName>
        <fullName>Dihydrolipoamide acetyltransferase component of branched-chain alpha-keto acid dehydrogenase complex</fullName>
    </alternativeName>
    <alternativeName>
        <fullName>Dihydrolipoamide branched chain transacylase</fullName>
    </alternativeName>
    <alternativeName>
        <fullName>Dihydrolipoyllysine-residue (2-methylpropanoyl)transferase</fullName>
    </alternativeName>
</protein>
<dbReference type="EC" id="2.3.1.168" evidence="9"/>
<dbReference type="EMBL" id="M21572">
    <property type="protein sequence ID" value="AAA30597.1"/>
    <property type="molecule type" value="mRNA"/>
</dbReference>
<dbReference type="EMBL" id="BC134527">
    <property type="protein sequence ID" value="AAI34528.1"/>
    <property type="molecule type" value="mRNA"/>
</dbReference>
<dbReference type="EMBL" id="M19475">
    <property type="protein sequence ID" value="AAA30596.1"/>
    <property type="molecule type" value="mRNA"/>
</dbReference>
<dbReference type="PIR" id="A30801">
    <property type="entry name" value="XUBOLA"/>
</dbReference>
<dbReference type="RefSeq" id="NP_776330.1">
    <property type="nucleotide sequence ID" value="NM_173905.2"/>
</dbReference>
<dbReference type="PDB" id="2IHW">
    <property type="method" value="X-ray"/>
    <property type="resolution" value="2.70 A"/>
    <property type="chains" value="A/B/C/D/E/F/G/H=223-482"/>
</dbReference>
<dbReference type="PDB" id="2II3">
    <property type="method" value="X-ray"/>
    <property type="resolution" value="2.17 A"/>
    <property type="chains" value="A/B/C/D/E/F/G/H=223-482"/>
</dbReference>
<dbReference type="PDB" id="2II4">
    <property type="method" value="X-ray"/>
    <property type="resolution" value="2.59 A"/>
    <property type="chains" value="A/B/C/D/E/F/G/H=223-482"/>
</dbReference>
<dbReference type="PDB" id="2II5">
    <property type="method" value="X-ray"/>
    <property type="resolution" value="2.50 A"/>
    <property type="chains" value="A/B/C/D/E/F/G/H=223-482"/>
</dbReference>
<dbReference type="PDBsum" id="2IHW"/>
<dbReference type="PDBsum" id="2II3"/>
<dbReference type="PDBsum" id="2II4"/>
<dbReference type="PDBsum" id="2II5"/>
<dbReference type="SMR" id="P11181"/>
<dbReference type="FunCoup" id="P11181">
    <property type="interactions" value="2652"/>
</dbReference>
<dbReference type="IntAct" id="P11181">
    <property type="interactions" value="1"/>
</dbReference>
<dbReference type="STRING" id="9913.ENSBTAP00000008292"/>
<dbReference type="PaxDb" id="9913-ENSBTAP00000008292"/>
<dbReference type="PeptideAtlas" id="P11181"/>
<dbReference type="Ensembl" id="ENSBTAT00000008292.7">
    <property type="protein sequence ID" value="ENSBTAP00000008292.5"/>
    <property type="gene ID" value="ENSBTAG00000006320.7"/>
</dbReference>
<dbReference type="GeneID" id="280759"/>
<dbReference type="KEGG" id="bta:280759"/>
<dbReference type="CTD" id="1629"/>
<dbReference type="VEuPathDB" id="HostDB:ENSBTAG00000006320"/>
<dbReference type="VGNC" id="VGNC:27896">
    <property type="gene designation" value="DBT"/>
</dbReference>
<dbReference type="eggNOG" id="KOG0558">
    <property type="taxonomic scope" value="Eukaryota"/>
</dbReference>
<dbReference type="GeneTree" id="ENSGT00940000156750"/>
<dbReference type="HOGENOM" id="CLU_016733_10_0_1"/>
<dbReference type="InParanoid" id="P11181"/>
<dbReference type="OMA" id="MPFCIKA"/>
<dbReference type="OrthoDB" id="202158at2759"/>
<dbReference type="TreeFam" id="TF314182"/>
<dbReference type="Reactome" id="R-BTA-70895">
    <property type="pathway name" value="Branched-chain amino acid catabolism"/>
</dbReference>
<dbReference type="Reactome" id="R-BTA-9013407">
    <property type="pathway name" value="RHOH GTPase cycle"/>
</dbReference>
<dbReference type="Reactome" id="R-BTA-9837999">
    <property type="pathway name" value="Mitochondrial protein degradation"/>
</dbReference>
<dbReference type="Reactome" id="R-BTA-9857492">
    <property type="pathway name" value="Protein lipoylation"/>
</dbReference>
<dbReference type="Reactome" id="R-BTA-9859138">
    <property type="pathway name" value="BCKDH synthesizes BCAA-CoA from KIC, KMVA, KIV"/>
</dbReference>
<dbReference type="SABIO-RK" id="P11181"/>
<dbReference type="EvolutionaryTrace" id="P11181"/>
<dbReference type="Proteomes" id="UP000009136">
    <property type="component" value="Chromosome 3"/>
</dbReference>
<dbReference type="Bgee" id="ENSBTAG00000006320">
    <property type="expression patterns" value="Expressed in liver and 106 other cell types or tissues"/>
</dbReference>
<dbReference type="GO" id="GO:0005737">
    <property type="term" value="C:cytoplasm"/>
    <property type="evidence" value="ECO:0000318"/>
    <property type="project" value="GO_Central"/>
</dbReference>
<dbReference type="GO" id="GO:0005759">
    <property type="term" value="C:mitochondrial matrix"/>
    <property type="evidence" value="ECO:0007669"/>
    <property type="project" value="UniProtKB-SubCell"/>
</dbReference>
<dbReference type="GO" id="GO:0005739">
    <property type="term" value="C:mitochondrion"/>
    <property type="evidence" value="ECO:0000318"/>
    <property type="project" value="GO_Central"/>
</dbReference>
<dbReference type="GO" id="GO:0016407">
    <property type="term" value="F:acetyltransferase activity"/>
    <property type="evidence" value="ECO:0000318"/>
    <property type="project" value="GO_Central"/>
</dbReference>
<dbReference type="GO" id="GO:0043754">
    <property type="term" value="F:dihydrolipoyllysine-residue (2-methylpropanoyl)transferase activity"/>
    <property type="evidence" value="ECO:0007669"/>
    <property type="project" value="UniProtKB-EC"/>
</dbReference>
<dbReference type="GO" id="GO:0031405">
    <property type="term" value="F:lipoic acid binding"/>
    <property type="evidence" value="ECO:0000318"/>
    <property type="project" value="GO_Central"/>
</dbReference>
<dbReference type="CDD" id="cd06849">
    <property type="entry name" value="lipoyl_domain"/>
    <property type="match status" value="1"/>
</dbReference>
<dbReference type="FunFam" id="2.40.50.100:FF:000013">
    <property type="entry name" value="Dihydrolipoamide acetyltransferase component of pyruvate dehydrogenase complex"/>
    <property type="match status" value="1"/>
</dbReference>
<dbReference type="FunFam" id="3.30.559.10:FF:000009">
    <property type="entry name" value="Dihydrolipoamide acetyltransferase component of pyruvate dehydrogenase complex"/>
    <property type="match status" value="1"/>
</dbReference>
<dbReference type="FunFam" id="4.10.320.10:FF:000002">
    <property type="entry name" value="Dihydrolipoamide acetyltransferase component of pyruvate dehydrogenase complex"/>
    <property type="match status" value="1"/>
</dbReference>
<dbReference type="Gene3D" id="2.40.50.100">
    <property type="match status" value="1"/>
</dbReference>
<dbReference type="Gene3D" id="3.30.559.10">
    <property type="entry name" value="Chloramphenicol acetyltransferase-like domain"/>
    <property type="match status" value="1"/>
</dbReference>
<dbReference type="Gene3D" id="4.10.320.10">
    <property type="entry name" value="E3-binding domain"/>
    <property type="match status" value="1"/>
</dbReference>
<dbReference type="InterPro" id="IPR003016">
    <property type="entry name" value="2-oxoA_DH_lipoyl-BS"/>
</dbReference>
<dbReference type="InterPro" id="IPR001078">
    <property type="entry name" value="2-oxoacid_DH_actylTfrase"/>
</dbReference>
<dbReference type="InterPro" id="IPR050743">
    <property type="entry name" value="2-oxoacid_DH_E2_comp"/>
</dbReference>
<dbReference type="InterPro" id="IPR000089">
    <property type="entry name" value="Biotin_lipoyl"/>
</dbReference>
<dbReference type="InterPro" id="IPR023213">
    <property type="entry name" value="CAT-like_dom_sf"/>
</dbReference>
<dbReference type="InterPro" id="IPR036625">
    <property type="entry name" value="E3-bd_dom_sf"/>
</dbReference>
<dbReference type="InterPro" id="IPR004167">
    <property type="entry name" value="PSBD"/>
</dbReference>
<dbReference type="InterPro" id="IPR011053">
    <property type="entry name" value="Single_hybrid_motif"/>
</dbReference>
<dbReference type="PANTHER" id="PTHR43178">
    <property type="entry name" value="DIHYDROLIPOAMIDE ACETYLTRANSFERASE COMPONENT OF PYRUVATE DEHYDROGENASE COMPLEX"/>
    <property type="match status" value="1"/>
</dbReference>
<dbReference type="PANTHER" id="PTHR43178:SF5">
    <property type="entry name" value="LIPOAMIDE ACYLTRANSFERASE COMPONENT OF BRANCHED-CHAIN ALPHA-KETO ACID DEHYDROGENASE COMPLEX, MITOCHONDRIAL"/>
    <property type="match status" value="1"/>
</dbReference>
<dbReference type="Pfam" id="PF00198">
    <property type="entry name" value="2-oxoacid_dh"/>
    <property type="match status" value="1"/>
</dbReference>
<dbReference type="Pfam" id="PF00364">
    <property type="entry name" value="Biotin_lipoyl"/>
    <property type="match status" value="1"/>
</dbReference>
<dbReference type="Pfam" id="PF02817">
    <property type="entry name" value="E3_binding"/>
    <property type="match status" value="1"/>
</dbReference>
<dbReference type="SUPFAM" id="SSF52777">
    <property type="entry name" value="CoA-dependent acyltransferases"/>
    <property type="match status" value="1"/>
</dbReference>
<dbReference type="SUPFAM" id="SSF47005">
    <property type="entry name" value="Peripheral subunit-binding domain of 2-oxo acid dehydrogenase complex"/>
    <property type="match status" value="1"/>
</dbReference>
<dbReference type="SUPFAM" id="SSF51230">
    <property type="entry name" value="Single hybrid motif"/>
    <property type="match status" value="1"/>
</dbReference>
<dbReference type="PROSITE" id="PS50968">
    <property type="entry name" value="BIOTINYL_LIPOYL"/>
    <property type="match status" value="1"/>
</dbReference>
<dbReference type="PROSITE" id="PS00189">
    <property type="entry name" value="LIPOYL"/>
    <property type="match status" value="1"/>
</dbReference>
<dbReference type="PROSITE" id="PS51826">
    <property type="entry name" value="PSBD"/>
    <property type="match status" value="1"/>
</dbReference>